<dbReference type="EMBL" id="CP001389">
    <property type="protein sequence ID" value="ACP24867.1"/>
    <property type="molecule type" value="Genomic_DNA"/>
</dbReference>
<dbReference type="RefSeq" id="WP_012707650.1">
    <property type="nucleotide sequence ID" value="NC_012587.1"/>
</dbReference>
<dbReference type="RefSeq" id="YP_002825620.1">
    <property type="nucleotide sequence ID" value="NC_012587.1"/>
</dbReference>
<dbReference type="SMR" id="C3MA88"/>
<dbReference type="STRING" id="394.NGR_c10810"/>
<dbReference type="GeneID" id="48972617"/>
<dbReference type="KEGG" id="rhi:NGR_c10810"/>
<dbReference type="PATRIC" id="fig|394.7.peg.3906"/>
<dbReference type="eggNOG" id="COG0267">
    <property type="taxonomic scope" value="Bacteria"/>
</dbReference>
<dbReference type="HOGENOM" id="CLU_190949_1_1_5"/>
<dbReference type="OrthoDB" id="21586at2"/>
<dbReference type="Proteomes" id="UP000001054">
    <property type="component" value="Chromosome"/>
</dbReference>
<dbReference type="GO" id="GO:0022625">
    <property type="term" value="C:cytosolic large ribosomal subunit"/>
    <property type="evidence" value="ECO:0007669"/>
    <property type="project" value="TreeGrafter"/>
</dbReference>
<dbReference type="GO" id="GO:0003735">
    <property type="term" value="F:structural constituent of ribosome"/>
    <property type="evidence" value="ECO:0007669"/>
    <property type="project" value="InterPro"/>
</dbReference>
<dbReference type="GO" id="GO:0006412">
    <property type="term" value="P:translation"/>
    <property type="evidence" value="ECO:0007669"/>
    <property type="project" value="UniProtKB-UniRule"/>
</dbReference>
<dbReference type="Gene3D" id="2.20.28.120">
    <property type="entry name" value="Ribosomal protein L33"/>
    <property type="match status" value="1"/>
</dbReference>
<dbReference type="HAMAP" id="MF_00294">
    <property type="entry name" value="Ribosomal_bL33"/>
    <property type="match status" value="1"/>
</dbReference>
<dbReference type="InterPro" id="IPR001705">
    <property type="entry name" value="Ribosomal_bL33"/>
</dbReference>
<dbReference type="InterPro" id="IPR018264">
    <property type="entry name" value="Ribosomal_bL33_CS"/>
</dbReference>
<dbReference type="InterPro" id="IPR038584">
    <property type="entry name" value="Ribosomal_bL33_sf"/>
</dbReference>
<dbReference type="InterPro" id="IPR011332">
    <property type="entry name" value="Ribosomal_zn-bd"/>
</dbReference>
<dbReference type="NCBIfam" id="NF001860">
    <property type="entry name" value="PRK00595.1"/>
    <property type="match status" value="1"/>
</dbReference>
<dbReference type="NCBIfam" id="TIGR01023">
    <property type="entry name" value="rpmG_bact"/>
    <property type="match status" value="1"/>
</dbReference>
<dbReference type="PANTHER" id="PTHR15238">
    <property type="entry name" value="54S RIBOSOMAL PROTEIN L39, MITOCHONDRIAL"/>
    <property type="match status" value="1"/>
</dbReference>
<dbReference type="PANTHER" id="PTHR15238:SF1">
    <property type="entry name" value="LARGE RIBOSOMAL SUBUNIT PROTEIN BL33M"/>
    <property type="match status" value="1"/>
</dbReference>
<dbReference type="Pfam" id="PF00471">
    <property type="entry name" value="Ribosomal_L33"/>
    <property type="match status" value="1"/>
</dbReference>
<dbReference type="SUPFAM" id="SSF57829">
    <property type="entry name" value="Zn-binding ribosomal proteins"/>
    <property type="match status" value="1"/>
</dbReference>
<dbReference type="PROSITE" id="PS00582">
    <property type="entry name" value="RIBOSOMAL_L33"/>
    <property type="match status" value="1"/>
</dbReference>
<sequence>MAKATTIKIKLLSTADTGYFYVTTKNSRTMTEKMTKTKYDPVVKKHVEFKETKIK</sequence>
<accession>C3MA88</accession>
<name>RL33_SINFN</name>
<evidence type="ECO:0000255" key="1">
    <source>
        <dbReference type="HAMAP-Rule" id="MF_00294"/>
    </source>
</evidence>
<evidence type="ECO:0000305" key="2"/>
<keyword id="KW-1185">Reference proteome</keyword>
<keyword id="KW-0687">Ribonucleoprotein</keyword>
<keyword id="KW-0689">Ribosomal protein</keyword>
<gene>
    <name evidence="1" type="primary">rpmG</name>
    <name type="ordered locus">NGR_c10810</name>
</gene>
<comment type="similarity">
    <text evidence="1">Belongs to the bacterial ribosomal protein bL33 family.</text>
</comment>
<organism>
    <name type="scientific">Sinorhizobium fredii (strain NBRC 101917 / NGR234)</name>
    <dbReference type="NCBI Taxonomy" id="394"/>
    <lineage>
        <taxon>Bacteria</taxon>
        <taxon>Pseudomonadati</taxon>
        <taxon>Pseudomonadota</taxon>
        <taxon>Alphaproteobacteria</taxon>
        <taxon>Hyphomicrobiales</taxon>
        <taxon>Rhizobiaceae</taxon>
        <taxon>Sinorhizobium/Ensifer group</taxon>
        <taxon>Sinorhizobium</taxon>
    </lineage>
</organism>
<reference key="1">
    <citation type="journal article" date="2009" name="Appl. Environ. Microbiol.">
        <title>Rhizobium sp. strain NGR234 possesses a remarkable number of secretion systems.</title>
        <authorList>
            <person name="Schmeisser C."/>
            <person name="Liesegang H."/>
            <person name="Krysciak D."/>
            <person name="Bakkou N."/>
            <person name="Le Quere A."/>
            <person name="Wollherr A."/>
            <person name="Heinemeyer I."/>
            <person name="Morgenstern B."/>
            <person name="Pommerening-Roeser A."/>
            <person name="Flores M."/>
            <person name="Palacios R."/>
            <person name="Brenner S."/>
            <person name="Gottschalk G."/>
            <person name="Schmitz R.A."/>
            <person name="Broughton W.J."/>
            <person name="Perret X."/>
            <person name="Strittmatter A.W."/>
            <person name="Streit W.R."/>
        </authorList>
    </citation>
    <scope>NUCLEOTIDE SEQUENCE [LARGE SCALE GENOMIC DNA]</scope>
    <source>
        <strain>NBRC 101917 / NGR234</strain>
    </source>
</reference>
<feature type="chain" id="PRO_1000204914" description="Large ribosomal subunit protein bL33">
    <location>
        <begin position="1"/>
        <end position="55"/>
    </location>
</feature>
<protein>
    <recommendedName>
        <fullName evidence="1">Large ribosomal subunit protein bL33</fullName>
    </recommendedName>
    <alternativeName>
        <fullName evidence="2">50S ribosomal protein L33</fullName>
    </alternativeName>
</protein>
<proteinExistence type="inferred from homology"/>